<name>RL23_METAC</name>
<comment type="function">
    <text evidence="1">Binds to 23S rRNA. One of the proteins that surrounds the polypeptide exit tunnel on the outside of the ribosome.</text>
</comment>
<comment type="subunit">
    <text evidence="1">Part of the 50S ribosomal subunit. Contacts protein L29.</text>
</comment>
<comment type="similarity">
    <text evidence="1">Belongs to the universal ribosomal protein uL23 family.</text>
</comment>
<keyword id="KW-1185">Reference proteome</keyword>
<keyword id="KW-0687">Ribonucleoprotein</keyword>
<keyword id="KW-0689">Ribosomal protein</keyword>
<keyword id="KW-0694">RNA-binding</keyword>
<keyword id="KW-0699">rRNA-binding</keyword>
<accession>Q8TRU5</accession>
<gene>
    <name evidence="1" type="primary">rpl23</name>
    <name type="ordered locus">MA_1074</name>
</gene>
<protein>
    <recommendedName>
        <fullName evidence="1">Large ribosomal subunit protein uL23</fullName>
    </recommendedName>
    <alternativeName>
        <fullName evidence="2">50S ribosomal protein L23</fullName>
    </alternativeName>
</protein>
<dbReference type="EMBL" id="AE010299">
    <property type="protein sequence ID" value="AAM04499.1"/>
    <property type="molecule type" value="Genomic_DNA"/>
</dbReference>
<dbReference type="RefSeq" id="WP_011021103.1">
    <property type="nucleotide sequence ID" value="NC_003552.1"/>
</dbReference>
<dbReference type="SMR" id="Q8TRU5"/>
<dbReference type="FunCoup" id="Q8TRU5">
    <property type="interactions" value="155"/>
</dbReference>
<dbReference type="STRING" id="188937.MA_1074"/>
<dbReference type="EnsemblBacteria" id="AAM04499">
    <property type="protein sequence ID" value="AAM04499"/>
    <property type="gene ID" value="MA_1074"/>
</dbReference>
<dbReference type="KEGG" id="mac:MA_1074"/>
<dbReference type="HOGENOM" id="CLU_037562_4_2_2"/>
<dbReference type="InParanoid" id="Q8TRU5"/>
<dbReference type="OrthoDB" id="7751at2157"/>
<dbReference type="PhylomeDB" id="Q8TRU5"/>
<dbReference type="Proteomes" id="UP000002487">
    <property type="component" value="Chromosome"/>
</dbReference>
<dbReference type="GO" id="GO:1990904">
    <property type="term" value="C:ribonucleoprotein complex"/>
    <property type="evidence" value="ECO:0007669"/>
    <property type="project" value="UniProtKB-KW"/>
</dbReference>
<dbReference type="GO" id="GO:0005840">
    <property type="term" value="C:ribosome"/>
    <property type="evidence" value="ECO:0007669"/>
    <property type="project" value="UniProtKB-KW"/>
</dbReference>
<dbReference type="GO" id="GO:0019843">
    <property type="term" value="F:rRNA binding"/>
    <property type="evidence" value="ECO:0007669"/>
    <property type="project" value="UniProtKB-UniRule"/>
</dbReference>
<dbReference type="GO" id="GO:0003735">
    <property type="term" value="F:structural constituent of ribosome"/>
    <property type="evidence" value="ECO:0007669"/>
    <property type="project" value="InterPro"/>
</dbReference>
<dbReference type="GO" id="GO:0006412">
    <property type="term" value="P:translation"/>
    <property type="evidence" value="ECO:0007669"/>
    <property type="project" value="UniProtKB-UniRule"/>
</dbReference>
<dbReference type="FunFam" id="3.30.70.330:FF:000532">
    <property type="entry name" value="50S ribosomal protein L23"/>
    <property type="match status" value="1"/>
</dbReference>
<dbReference type="Gene3D" id="3.30.70.330">
    <property type="match status" value="1"/>
</dbReference>
<dbReference type="HAMAP" id="MF_01369_A">
    <property type="entry name" value="Ribosomal_uL23_A"/>
    <property type="match status" value="1"/>
</dbReference>
<dbReference type="InterPro" id="IPR012677">
    <property type="entry name" value="Nucleotide-bd_a/b_plait_sf"/>
</dbReference>
<dbReference type="InterPro" id="IPR019985">
    <property type="entry name" value="Ribosomal_uL23"/>
</dbReference>
<dbReference type="InterPro" id="IPR013025">
    <property type="entry name" value="Ribosomal_uL23-like"/>
</dbReference>
<dbReference type="InterPro" id="IPR012678">
    <property type="entry name" value="Ribosomal_uL23/eL15/eS24_sf"/>
</dbReference>
<dbReference type="NCBIfam" id="NF011118">
    <property type="entry name" value="PRK14548.1"/>
    <property type="match status" value="1"/>
</dbReference>
<dbReference type="NCBIfam" id="TIGR03636">
    <property type="entry name" value="uL23_arch"/>
    <property type="match status" value="1"/>
</dbReference>
<dbReference type="PANTHER" id="PTHR11620">
    <property type="entry name" value="60S RIBOSOMAL PROTEIN L23A"/>
    <property type="match status" value="1"/>
</dbReference>
<dbReference type="Pfam" id="PF00276">
    <property type="entry name" value="Ribosomal_L23"/>
    <property type="match status" value="1"/>
</dbReference>
<dbReference type="SUPFAM" id="SSF54189">
    <property type="entry name" value="Ribosomal proteins S24e, L23 and L15e"/>
    <property type="match status" value="1"/>
</dbReference>
<reference key="1">
    <citation type="journal article" date="2002" name="Genome Res.">
        <title>The genome of Methanosarcina acetivorans reveals extensive metabolic and physiological diversity.</title>
        <authorList>
            <person name="Galagan J.E."/>
            <person name="Nusbaum C."/>
            <person name="Roy A."/>
            <person name="Endrizzi M.G."/>
            <person name="Macdonald P."/>
            <person name="FitzHugh W."/>
            <person name="Calvo S."/>
            <person name="Engels R."/>
            <person name="Smirnov S."/>
            <person name="Atnoor D."/>
            <person name="Brown A."/>
            <person name="Allen N."/>
            <person name="Naylor J."/>
            <person name="Stange-Thomann N."/>
            <person name="DeArellano K."/>
            <person name="Johnson R."/>
            <person name="Linton L."/>
            <person name="McEwan P."/>
            <person name="McKernan K."/>
            <person name="Talamas J."/>
            <person name="Tirrell A."/>
            <person name="Ye W."/>
            <person name="Zimmer A."/>
            <person name="Barber R.D."/>
            <person name="Cann I."/>
            <person name="Graham D.E."/>
            <person name="Grahame D.A."/>
            <person name="Guss A.M."/>
            <person name="Hedderich R."/>
            <person name="Ingram-Smith C."/>
            <person name="Kuettner H.C."/>
            <person name="Krzycki J.A."/>
            <person name="Leigh J.A."/>
            <person name="Li W."/>
            <person name="Liu J."/>
            <person name="Mukhopadhyay B."/>
            <person name="Reeve J.N."/>
            <person name="Smith K."/>
            <person name="Springer T.A."/>
            <person name="Umayam L.A."/>
            <person name="White O."/>
            <person name="White R.H."/>
            <person name="de Macario E.C."/>
            <person name="Ferry J.G."/>
            <person name="Jarrell K.F."/>
            <person name="Jing H."/>
            <person name="Macario A.J.L."/>
            <person name="Paulsen I.T."/>
            <person name="Pritchett M."/>
            <person name="Sowers K.R."/>
            <person name="Swanson R.V."/>
            <person name="Zinder S.H."/>
            <person name="Lander E."/>
            <person name="Metcalf W.W."/>
            <person name="Birren B."/>
        </authorList>
    </citation>
    <scope>NUCLEOTIDE SEQUENCE [LARGE SCALE GENOMIC DNA]</scope>
    <source>
        <strain>ATCC 35395 / DSM 2834 / JCM 12185 / C2A</strain>
    </source>
</reference>
<evidence type="ECO:0000255" key="1">
    <source>
        <dbReference type="HAMAP-Rule" id="MF_01369"/>
    </source>
</evidence>
<evidence type="ECO:0000305" key="2"/>
<proteinExistence type="inferred from homology"/>
<sequence length="82" mass="9433">MSSINYPFVTEKAMMLLDENKLQFIVDTRSNKKQILEDVEKMYGFKVKSVRTMTTMKGMKKAVLAFEEPEAAHEIATRIGLM</sequence>
<feature type="chain" id="PRO_0000272944" description="Large ribosomal subunit protein uL23">
    <location>
        <begin position="1"/>
        <end position="82"/>
    </location>
</feature>
<organism>
    <name type="scientific">Methanosarcina acetivorans (strain ATCC 35395 / DSM 2834 / JCM 12185 / C2A)</name>
    <dbReference type="NCBI Taxonomy" id="188937"/>
    <lineage>
        <taxon>Archaea</taxon>
        <taxon>Methanobacteriati</taxon>
        <taxon>Methanobacteriota</taxon>
        <taxon>Stenosarchaea group</taxon>
        <taxon>Methanomicrobia</taxon>
        <taxon>Methanosarcinales</taxon>
        <taxon>Methanosarcinaceae</taxon>
        <taxon>Methanosarcina</taxon>
    </lineage>
</organism>